<organism>
    <name type="scientific">Escherichia coli (strain SE11)</name>
    <dbReference type="NCBI Taxonomy" id="409438"/>
    <lineage>
        <taxon>Bacteria</taxon>
        <taxon>Pseudomonadati</taxon>
        <taxon>Pseudomonadota</taxon>
        <taxon>Gammaproteobacteria</taxon>
        <taxon>Enterobacterales</taxon>
        <taxon>Enterobacteriaceae</taxon>
        <taxon>Escherichia</taxon>
    </lineage>
</organism>
<feature type="chain" id="PRO_1000137981" description="Arginine N-succinyltransferase">
    <location>
        <begin position="1"/>
        <end position="344"/>
    </location>
</feature>
<feature type="active site" description="Proton donor" evidence="1">
    <location>
        <position position="229"/>
    </location>
</feature>
<feature type="binding site" evidence="1">
    <location>
        <position position="125"/>
    </location>
    <ligand>
        <name>succinyl-CoA</name>
        <dbReference type="ChEBI" id="CHEBI:57292"/>
    </ligand>
</feature>
<reference key="1">
    <citation type="journal article" date="2008" name="DNA Res.">
        <title>Complete genome sequence and comparative analysis of the wild-type commensal Escherichia coli strain SE11 isolated from a healthy adult.</title>
        <authorList>
            <person name="Oshima K."/>
            <person name="Toh H."/>
            <person name="Ogura Y."/>
            <person name="Sasamoto H."/>
            <person name="Morita H."/>
            <person name="Park S.-H."/>
            <person name="Ooka T."/>
            <person name="Iyoda S."/>
            <person name="Taylor T.D."/>
            <person name="Hayashi T."/>
            <person name="Itoh K."/>
            <person name="Hattori M."/>
        </authorList>
    </citation>
    <scope>NUCLEOTIDE SEQUENCE [LARGE SCALE GENOMIC DNA]</scope>
    <source>
        <strain>SE11</strain>
    </source>
</reference>
<comment type="function">
    <text evidence="1">Catalyzes the transfer of succinyl-CoA to arginine to produce N(2)-succinylarginine.</text>
</comment>
<comment type="catalytic activity">
    <reaction evidence="1">
        <text>succinyl-CoA + L-arginine = N(2)-succinyl-L-arginine + CoA + H(+)</text>
        <dbReference type="Rhea" id="RHEA:15185"/>
        <dbReference type="ChEBI" id="CHEBI:15378"/>
        <dbReference type="ChEBI" id="CHEBI:32682"/>
        <dbReference type="ChEBI" id="CHEBI:57287"/>
        <dbReference type="ChEBI" id="CHEBI:57292"/>
        <dbReference type="ChEBI" id="CHEBI:58241"/>
        <dbReference type="EC" id="2.3.1.109"/>
    </reaction>
</comment>
<comment type="pathway">
    <text evidence="1">Amino-acid degradation; L-arginine degradation via AST pathway; L-glutamate and succinate from L-arginine: step 1/5.</text>
</comment>
<comment type="similarity">
    <text evidence="1">Belongs to the arginine N-succinyltransferase family.</text>
</comment>
<gene>
    <name evidence="1" type="primary">astA</name>
    <name type="ordered locus">ECSE_1917</name>
</gene>
<sequence length="344" mass="38428">MMVIRPVERSDVSALMQLASKTGGGLTSLPANEATLSARIERAIKTWQGELPKSEQGYVFVLEDSETGTVAGICAIEVAVGLNDPWYNYRVGTLVHASKELNVYNALPTLFLSNDHTGSSELCTLFLDPDWRKEGNGYLLSKSRFMFMAAFRDKFNDKVVAEMRGVIDEHGYSPFWQSLGKRFFSMDFSRADFLCGTGQKAFIAELMPKHPIYTHFLSQEAQDVIGQVHPQTAPARAVLEKEGFRYRNYIDIFDGGPTLECDIDRVRAIRKSRLVEVAEGQPAQGDFPACLVANENYHHFRVVLARTDPATERLILTAAQLDALKCHAGDRVRLVRLCAEEKTA</sequence>
<keyword id="KW-0012">Acyltransferase</keyword>
<keyword id="KW-0056">Arginine metabolism</keyword>
<keyword id="KW-0808">Transferase</keyword>
<name>ASTA_ECOSE</name>
<accession>B6IBG7</accession>
<protein>
    <recommendedName>
        <fullName evidence="1">Arginine N-succinyltransferase</fullName>
        <shortName evidence="1">AST</shortName>
        <ecNumber evidence="1">2.3.1.109</ecNumber>
    </recommendedName>
    <alternativeName>
        <fullName evidence="1">AOST</fullName>
    </alternativeName>
</protein>
<evidence type="ECO:0000255" key="1">
    <source>
        <dbReference type="HAMAP-Rule" id="MF_01171"/>
    </source>
</evidence>
<dbReference type="EC" id="2.3.1.109" evidence="1"/>
<dbReference type="EMBL" id="AP009240">
    <property type="protein sequence ID" value="BAG77441.1"/>
    <property type="molecule type" value="Genomic_DNA"/>
</dbReference>
<dbReference type="RefSeq" id="WP_000989414.1">
    <property type="nucleotide sequence ID" value="NC_011415.1"/>
</dbReference>
<dbReference type="SMR" id="B6IBG7"/>
<dbReference type="GeneID" id="75203053"/>
<dbReference type="KEGG" id="ecy:ECSE_1917"/>
<dbReference type="HOGENOM" id="CLU_057655_0_0_6"/>
<dbReference type="UniPathway" id="UPA00185">
    <property type="reaction ID" value="UER00279"/>
</dbReference>
<dbReference type="Proteomes" id="UP000008199">
    <property type="component" value="Chromosome"/>
</dbReference>
<dbReference type="GO" id="GO:0008791">
    <property type="term" value="F:arginine N-succinyltransferase activity"/>
    <property type="evidence" value="ECO:0007669"/>
    <property type="project" value="UniProtKB-UniRule"/>
</dbReference>
<dbReference type="GO" id="GO:0019544">
    <property type="term" value="P:arginine catabolic process to glutamate"/>
    <property type="evidence" value="ECO:0007669"/>
    <property type="project" value="UniProtKB-UniRule"/>
</dbReference>
<dbReference type="GO" id="GO:0019545">
    <property type="term" value="P:arginine catabolic process to succinate"/>
    <property type="evidence" value="ECO:0007669"/>
    <property type="project" value="UniProtKB-UniRule"/>
</dbReference>
<dbReference type="Gene3D" id="2.40.40.20">
    <property type="match status" value="1"/>
</dbReference>
<dbReference type="Gene3D" id="3.40.630.30">
    <property type="match status" value="1"/>
</dbReference>
<dbReference type="HAMAP" id="MF_01171">
    <property type="entry name" value="AstA"/>
    <property type="match status" value="1"/>
</dbReference>
<dbReference type="InterPro" id="IPR016181">
    <property type="entry name" value="Acyl_CoA_acyltransferase"/>
</dbReference>
<dbReference type="InterPro" id="IPR007041">
    <property type="entry name" value="Arg_succinylTrfase_AstA/AruG"/>
</dbReference>
<dbReference type="InterPro" id="IPR017650">
    <property type="entry name" value="Arginine_N-succinylTrfase"/>
</dbReference>
<dbReference type="NCBIfam" id="TIGR03243">
    <property type="entry name" value="arg_catab_AOST"/>
    <property type="match status" value="1"/>
</dbReference>
<dbReference type="NCBIfam" id="TIGR03244">
    <property type="entry name" value="arg_catab_AstA"/>
    <property type="match status" value="1"/>
</dbReference>
<dbReference type="NCBIfam" id="NF007770">
    <property type="entry name" value="PRK10456.1"/>
    <property type="match status" value="1"/>
</dbReference>
<dbReference type="PANTHER" id="PTHR30420:SF1">
    <property type="entry name" value="ARGININE N-SUCCINYLTRANSFERASE"/>
    <property type="match status" value="1"/>
</dbReference>
<dbReference type="PANTHER" id="PTHR30420">
    <property type="entry name" value="N-SUCCINYLARGININE DIHYDROLASE"/>
    <property type="match status" value="1"/>
</dbReference>
<dbReference type="Pfam" id="PF04958">
    <property type="entry name" value="AstA"/>
    <property type="match status" value="1"/>
</dbReference>
<dbReference type="SUPFAM" id="SSF55729">
    <property type="entry name" value="Acyl-CoA N-acyltransferases (Nat)"/>
    <property type="match status" value="1"/>
</dbReference>
<proteinExistence type="inferred from homology"/>